<name>METJ_ECODH</name>
<organism>
    <name type="scientific">Escherichia coli (strain K12 / DH10B)</name>
    <dbReference type="NCBI Taxonomy" id="316385"/>
    <lineage>
        <taxon>Bacteria</taxon>
        <taxon>Pseudomonadati</taxon>
        <taxon>Pseudomonadota</taxon>
        <taxon>Gammaproteobacteria</taxon>
        <taxon>Enterobacterales</taxon>
        <taxon>Enterobacteriaceae</taxon>
        <taxon>Escherichia</taxon>
    </lineage>
</organism>
<gene>
    <name evidence="1" type="primary">metJ</name>
    <name type="ordered locus">ECDH10B_4127</name>
</gene>
<feature type="chain" id="PRO_1000191209" description="Met repressor">
    <location>
        <begin position="1"/>
        <end position="105"/>
    </location>
</feature>
<comment type="function">
    <text evidence="1">This regulatory protein, when combined with SAM (S-adenosylmethionine) represses the expression of the methionine regulon and of enzymes involved in SAM synthesis.</text>
</comment>
<comment type="subunit">
    <text evidence="1">Homodimer.</text>
</comment>
<comment type="subcellular location">
    <subcellularLocation>
        <location evidence="1">Cytoplasm</location>
    </subcellularLocation>
</comment>
<comment type="domain">
    <text>Does not bind DNA by a helix-turn-helix motif.</text>
</comment>
<comment type="similarity">
    <text evidence="1">Belongs to the MetJ family.</text>
</comment>
<accession>B1XBA4</accession>
<keyword id="KW-0028">Amino-acid biosynthesis</keyword>
<keyword id="KW-0963">Cytoplasm</keyword>
<keyword id="KW-0238">DNA-binding</keyword>
<keyword id="KW-0486">Methionine biosynthesis</keyword>
<keyword id="KW-0678">Repressor</keyword>
<keyword id="KW-0804">Transcription</keyword>
<keyword id="KW-0805">Transcription regulation</keyword>
<reference key="1">
    <citation type="journal article" date="2008" name="J. Bacteriol.">
        <title>The complete genome sequence of Escherichia coli DH10B: insights into the biology of a laboratory workhorse.</title>
        <authorList>
            <person name="Durfee T."/>
            <person name="Nelson R."/>
            <person name="Baldwin S."/>
            <person name="Plunkett G. III"/>
            <person name="Burland V."/>
            <person name="Mau B."/>
            <person name="Petrosino J.F."/>
            <person name="Qin X."/>
            <person name="Muzny D.M."/>
            <person name="Ayele M."/>
            <person name="Gibbs R.A."/>
            <person name="Csorgo B."/>
            <person name="Posfai G."/>
            <person name="Weinstock G.M."/>
            <person name="Blattner F.R."/>
        </authorList>
    </citation>
    <scope>NUCLEOTIDE SEQUENCE [LARGE SCALE GENOMIC DNA]</scope>
    <source>
        <strain>K12 / DH10B</strain>
    </source>
</reference>
<dbReference type="EMBL" id="CP000948">
    <property type="protein sequence ID" value="ACB04950.1"/>
    <property type="molecule type" value="Genomic_DNA"/>
</dbReference>
<dbReference type="RefSeq" id="WP_000852812.1">
    <property type="nucleotide sequence ID" value="NC_010473.1"/>
</dbReference>
<dbReference type="SMR" id="B1XBA4"/>
<dbReference type="GeneID" id="93777954"/>
<dbReference type="KEGG" id="ecd:ECDH10B_4127"/>
<dbReference type="HOGENOM" id="CLU_142318_0_0_6"/>
<dbReference type="GO" id="GO:0005737">
    <property type="term" value="C:cytoplasm"/>
    <property type="evidence" value="ECO:0007669"/>
    <property type="project" value="UniProtKB-SubCell"/>
</dbReference>
<dbReference type="GO" id="GO:0003677">
    <property type="term" value="F:DNA binding"/>
    <property type="evidence" value="ECO:0007669"/>
    <property type="project" value="UniProtKB-KW"/>
</dbReference>
<dbReference type="GO" id="GO:0003700">
    <property type="term" value="F:DNA-binding transcription factor activity"/>
    <property type="evidence" value="ECO:0007669"/>
    <property type="project" value="InterPro"/>
</dbReference>
<dbReference type="GO" id="GO:0009086">
    <property type="term" value="P:methionine biosynthetic process"/>
    <property type="evidence" value="ECO:0007669"/>
    <property type="project" value="UniProtKB-UniRule"/>
</dbReference>
<dbReference type="GO" id="GO:0045892">
    <property type="term" value="P:negative regulation of DNA-templated transcription"/>
    <property type="evidence" value="ECO:0007669"/>
    <property type="project" value="UniProtKB-UniRule"/>
</dbReference>
<dbReference type="CDD" id="cd00490">
    <property type="entry name" value="Met_repressor_MetJ"/>
    <property type="match status" value="1"/>
</dbReference>
<dbReference type="FunFam" id="1.10.140.10:FF:000001">
    <property type="entry name" value="Met repressor"/>
    <property type="match status" value="1"/>
</dbReference>
<dbReference type="Gene3D" id="1.10.140.10">
    <property type="entry name" value="MET Apo-Repressor, subunit A"/>
    <property type="match status" value="1"/>
</dbReference>
<dbReference type="HAMAP" id="MF_00744">
    <property type="entry name" value="MetJ"/>
    <property type="match status" value="1"/>
</dbReference>
<dbReference type="InterPro" id="IPR002084">
    <property type="entry name" value="Met_repressor_MetJ"/>
</dbReference>
<dbReference type="InterPro" id="IPR023453">
    <property type="entry name" value="Met_repressor_MetJ_dom_sf"/>
</dbReference>
<dbReference type="InterPro" id="IPR010985">
    <property type="entry name" value="Ribbon_hlx_hlx"/>
</dbReference>
<dbReference type="NCBIfam" id="NF003622">
    <property type="entry name" value="PRK05264.1"/>
    <property type="match status" value="1"/>
</dbReference>
<dbReference type="Pfam" id="PF01340">
    <property type="entry name" value="MetJ"/>
    <property type="match status" value="1"/>
</dbReference>
<dbReference type="SUPFAM" id="SSF47598">
    <property type="entry name" value="Ribbon-helix-helix"/>
    <property type="match status" value="1"/>
</dbReference>
<sequence>MAEWSGEYISPYAEHGKKSEQVKKITVSIPLKVLKILTDERTRRQVNNLRHATNSELLCEAFLHAFTGQPLPDDADLRKERSDEIPEAAKEIMREMGINPETWEY</sequence>
<evidence type="ECO:0000255" key="1">
    <source>
        <dbReference type="HAMAP-Rule" id="MF_00744"/>
    </source>
</evidence>
<protein>
    <recommendedName>
        <fullName evidence="1">Met repressor</fullName>
    </recommendedName>
    <alternativeName>
        <fullName evidence="1">Met regulon regulatory protein MetJ</fullName>
    </alternativeName>
</protein>
<proteinExistence type="inferred from homology"/>